<organism>
    <name type="scientific">Shewanella loihica (strain ATCC BAA-1088 / PV-4)</name>
    <dbReference type="NCBI Taxonomy" id="323850"/>
    <lineage>
        <taxon>Bacteria</taxon>
        <taxon>Pseudomonadati</taxon>
        <taxon>Pseudomonadota</taxon>
        <taxon>Gammaproteobacteria</taxon>
        <taxon>Alteromonadales</taxon>
        <taxon>Shewanellaceae</taxon>
        <taxon>Shewanella</taxon>
    </lineage>
</organism>
<gene>
    <name evidence="1" type="primary">recF</name>
    <name type="ordered locus">Shew_0003</name>
</gene>
<protein>
    <recommendedName>
        <fullName evidence="1">DNA replication and repair protein RecF</fullName>
    </recommendedName>
</protein>
<comment type="function">
    <text evidence="1">The RecF protein is involved in DNA metabolism; it is required for DNA replication and normal SOS inducibility. RecF binds preferentially to single-stranded, linear DNA. It also seems to bind ATP.</text>
</comment>
<comment type="subcellular location">
    <subcellularLocation>
        <location evidence="1">Cytoplasm</location>
    </subcellularLocation>
</comment>
<comment type="similarity">
    <text evidence="1">Belongs to the RecF family.</text>
</comment>
<feature type="chain" id="PRO_1000048574" description="DNA replication and repair protein RecF">
    <location>
        <begin position="1"/>
        <end position="360"/>
    </location>
</feature>
<feature type="binding site" evidence="1">
    <location>
        <begin position="30"/>
        <end position="37"/>
    </location>
    <ligand>
        <name>ATP</name>
        <dbReference type="ChEBI" id="CHEBI:30616"/>
    </ligand>
</feature>
<keyword id="KW-0067">ATP-binding</keyword>
<keyword id="KW-0963">Cytoplasm</keyword>
<keyword id="KW-0227">DNA damage</keyword>
<keyword id="KW-0234">DNA repair</keyword>
<keyword id="KW-0235">DNA replication</keyword>
<keyword id="KW-0238">DNA-binding</keyword>
<keyword id="KW-0547">Nucleotide-binding</keyword>
<keyword id="KW-1185">Reference proteome</keyword>
<keyword id="KW-0742">SOS response</keyword>
<proteinExistence type="inferred from homology"/>
<sequence length="360" mass="40962">MSLSRLHIDSFRNIASAQLQLGDGLNLIYGQNGSGKTSILEAIFFLGMGRSFRSHLSQRVIQNDQDKLTLFAQLEQGEQETKIGLRRYRSGETEVKMNGEKVKRLSTLAETLPIQVITPESFSLLFEGPKSRRQFIDWGAFHTDKSFYTAWANVRRILKHRNQMLKSETPYQQIQFWDKELVRYAEIVTEIRKRYVGSLNERLKGIIEEFLPQVDVKVSFTRGWDSKTDYQTLLQAQYPRDLAAGHTASGPHKADLRLRVGTLPVQDALSRGQLKLLVCALRIAQGKLLKQQIDKNSIYLVDDLPSELDARHRQLLLQQLSDTGAQVFVTAIEPAAIMDSLNTPPVKVFHVEQGRVTVIE</sequence>
<dbReference type="EMBL" id="CP000606">
    <property type="protein sequence ID" value="ABO21876.1"/>
    <property type="molecule type" value="Genomic_DNA"/>
</dbReference>
<dbReference type="RefSeq" id="WP_011863813.1">
    <property type="nucleotide sequence ID" value="NC_009092.1"/>
</dbReference>
<dbReference type="SMR" id="A3Q8S8"/>
<dbReference type="STRING" id="323850.Shew_0003"/>
<dbReference type="KEGG" id="slo:Shew_0003"/>
<dbReference type="eggNOG" id="COG1195">
    <property type="taxonomic scope" value="Bacteria"/>
</dbReference>
<dbReference type="HOGENOM" id="CLU_040267_0_0_6"/>
<dbReference type="OrthoDB" id="9803889at2"/>
<dbReference type="Proteomes" id="UP000001558">
    <property type="component" value="Chromosome"/>
</dbReference>
<dbReference type="GO" id="GO:0005737">
    <property type="term" value="C:cytoplasm"/>
    <property type="evidence" value="ECO:0007669"/>
    <property type="project" value="UniProtKB-SubCell"/>
</dbReference>
<dbReference type="GO" id="GO:0005524">
    <property type="term" value="F:ATP binding"/>
    <property type="evidence" value="ECO:0007669"/>
    <property type="project" value="UniProtKB-UniRule"/>
</dbReference>
<dbReference type="GO" id="GO:0003697">
    <property type="term" value="F:single-stranded DNA binding"/>
    <property type="evidence" value="ECO:0007669"/>
    <property type="project" value="UniProtKB-UniRule"/>
</dbReference>
<dbReference type="GO" id="GO:0006260">
    <property type="term" value="P:DNA replication"/>
    <property type="evidence" value="ECO:0007669"/>
    <property type="project" value="UniProtKB-UniRule"/>
</dbReference>
<dbReference type="GO" id="GO:0000731">
    <property type="term" value="P:DNA synthesis involved in DNA repair"/>
    <property type="evidence" value="ECO:0007669"/>
    <property type="project" value="TreeGrafter"/>
</dbReference>
<dbReference type="GO" id="GO:0006302">
    <property type="term" value="P:double-strand break repair"/>
    <property type="evidence" value="ECO:0007669"/>
    <property type="project" value="TreeGrafter"/>
</dbReference>
<dbReference type="GO" id="GO:0009432">
    <property type="term" value="P:SOS response"/>
    <property type="evidence" value="ECO:0007669"/>
    <property type="project" value="UniProtKB-UniRule"/>
</dbReference>
<dbReference type="Gene3D" id="3.40.50.300">
    <property type="entry name" value="P-loop containing nucleotide triphosphate hydrolases"/>
    <property type="match status" value="1"/>
</dbReference>
<dbReference type="Gene3D" id="1.20.1050.90">
    <property type="entry name" value="RecF/RecN/SMC, N-terminal domain"/>
    <property type="match status" value="1"/>
</dbReference>
<dbReference type="HAMAP" id="MF_00365">
    <property type="entry name" value="RecF"/>
    <property type="match status" value="1"/>
</dbReference>
<dbReference type="InterPro" id="IPR001238">
    <property type="entry name" value="DNA-binding_RecF"/>
</dbReference>
<dbReference type="InterPro" id="IPR018078">
    <property type="entry name" value="DNA-binding_RecF_CS"/>
</dbReference>
<dbReference type="InterPro" id="IPR027417">
    <property type="entry name" value="P-loop_NTPase"/>
</dbReference>
<dbReference type="InterPro" id="IPR003395">
    <property type="entry name" value="RecF/RecN/SMC_N"/>
</dbReference>
<dbReference type="InterPro" id="IPR042174">
    <property type="entry name" value="RecF_2"/>
</dbReference>
<dbReference type="NCBIfam" id="TIGR00611">
    <property type="entry name" value="recf"/>
    <property type="match status" value="1"/>
</dbReference>
<dbReference type="PANTHER" id="PTHR32182">
    <property type="entry name" value="DNA REPLICATION AND REPAIR PROTEIN RECF"/>
    <property type="match status" value="1"/>
</dbReference>
<dbReference type="PANTHER" id="PTHR32182:SF0">
    <property type="entry name" value="DNA REPLICATION AND REPAIR PROTEIN RECF"/>
    <property type="match status" value="1"/>
</dbReference>
<dbReference type="Pfam" id="PF02463">
    <property type="entry name" value="SMC_N"/>
    <property type="match status" value="1"/>
</dbReference>
<dbReference type="SUPFAM" id="SSF52540">
    <property type="entry name" value="P-loop containing nucleoside triphosphate hydrolases"/>
    <property type="match status" value="1"/>
</dbReference>
<dbReference type="PROSITE" id="PS00617">
    <property type="entry name" value="RECF_1"/>
    <property type="match status" value="1"/>
</dbReference>
<dbReference type="PROSITE" id="PS00618">
    <property type="entry name" value="RECF_2"/>
    <property type="match status" value="1"/>
</dbReference>
<reference key="1">
    <citation type="submission" date="2007-03" db="EMBL/GenBank/DDBJ databases">
        <title>Complete sequence of Shewanella loihica PV-4.</title>
        <authorList>
            <consortium name="US DOE Joint Genome Institute"/>
            <person name="Copeland A."/>
            <person name="Lucas S."/>
            <person name="Lapidus A."/>
            <person name="Barry K."/>
            <person name="Detter J.C."/>
            <person name="Glavina del Rio T."/>
            <person name="Hammon N."/>
            <person name="Israni S."/>
            <person name="Dalin E."/>
            <person name="Tice H."/>
            <person name="Pitluck S."/>
            <person name="Chain P."/>
            <person name="Malfatti S."/>
            <person name="Shin M."/>
            <person name="Vergez L."/>
            <person name="Schmutz J."/>
            <person name="Larimer F."/>
            <person name="Land M."/>
            <person name="Hauser L."/>
            <person name="Kyrpides N."/>
            <person name="Mikhailova N."/>
            <person name="Romine M.F."/>
            <person name="Serres G."/>
            <person name="Fredrickson J."/>
            <person name="Tiedje J."/>
            <person name="Richardson P."/>
        </authorList>
    </citation>
    <scope>NUCLEOTIDE SEQUENCE [LARGE SCALE GENOMIC DNA]</scope>
    <source>
        <strain>ATCC BAA-1088 / PV-4</strain>
    </source>
</reference>
<evidence type="ECO:0000255" key="1">
    <source>
        <dbReference type="HAMAP-Rule" id="MF_00365"/>
    </source>
</evidence>
<accession>A3Q8S8</accession>
<name>RECF_SHELP</name>